<organism>
    <name type="scientific">Geotrichum candidum</name>
    <name type="common">Oospora lactis</name>
    <name type="synonym">Dipodascus geotrichum</name>
    <dbReference type="NCBI Taxonomy" id="1173061"/>
    <lineage>
        <taxon>Eukaryota</taxon>
        <taxon>Fungi</taxon>
        <taxon>Dikarya</taxon>
        <taxon>Ascomycota</taxon>
        <taxon>Saccharomycotina</taxon>
        <taxon>Dipodascomycetes</taxon>
        <taxon>Dipodascales</taxon>
        <taxon>Dipodascaceae</taxon>
        <taxon>Geotrichum</taxon>
    </lineage>
</organism>
<reference key="1">
    <citation type="journal article" date="1991" name="Mol. Gen. Genet.">
        <title>Characterization of two beta-tubulin genes from Geotrichum candidum.</title>
        <authorList>
            <person name="Gold S.E."/>
            <person name="Casale W.L."/>
            <person name="Keen N.T."/>
        </authorList>
    </citation>
    <scope>NUCLEOTIDE SEQUENCE [GENOMIC DNA]</scope>
</reference>
<keyword id="KW-0963">Cytoplasm</keyword>
<keyword id="KW-0206">Cytoskeleton</keyword>
<keyword id="KW-0342">GTP-binding</keyword>
<keyword id="KW-0460">Magnesium</keyword>
<keyword id="KW-0479">Metal-binding</keyword>
<keyword id="KW-0493">Microtubule</keyword>
<keyword id="KW-0547">Nucleotide-binding</keyword>
<dbReference type="EMBL" id="S69627">
    <property type="protein sequence ID" value="AAB20557.1"/>
    <property type="status" value="ALT_SEQ"/>
    <property type="molecule type" value="Genomic_DNA"/>
</dbReference>
<dbReference type="PIR" id="S18597">
    <property type="entry name" value="S18597"/>
</dbReference>
<dbReference type="SMR" id="P32925"/>
<dbReference type="GO" id="GO:0005737">
    <property type="term" value="C:cytoplasm"/>
    <property type="evidence" value="ECO:0007669"/>
    <property type="project" value="UniProtKB-KW"/>
</dbReference>
<dbReference type="GO" id="GO:0005874">
    <property type="term" value="C:microtubule"/>
    <property type="evidence" value="ECO:0007669"/>
    <property type="project" value="UniProtKB-KW"/>
</dbReference>
<dbReference type="GO" id="GO:0005525">
    <property type="term" value="F:GTP binding"/>
    <property type="evidence" value="ECO:0007669"/>
    <property type="project" value="UniProtKB-KW"/>
</dbReference>
<dbReference type="GO" id="GO:0003924">
    <property type="term" value="F:GTPase activity"/>
    <property type="evidence" value="ECO:0007669"/>
    <property type="project" value="InterPro"/>
</dbReference>
<dbReference type="GO" id="GO:0046872">
    <property type="term" value="F:metal ion binding"/>
    <property type="evidence" value="ECO:0007669"/>
    <property type="project" value="UniProtKB-KW"/>
</dbReference>
<dbReference type="GO" id="GO:0005200">
    <property type="term" value="F:structural constituent of cytoskeleton"/>
    <property type="evidence" value="ECO:0007669"/>
    <property type="project" value="InterPro"/>
</dbReference>
<dbReference type="GO" id="GO:0007017">
    <property type="term" value="P:microtubule-based process"/>
    <property type="evidence" value="ECO:0007669"/>
    <property type="project" value="InterPro"/>
</dbReference>
<dbReference type="CDD" id="cd02187">
    <property type="entry name" value="beta_tubulin"/>
    <property type="match status" value="1"/>
</dbReference>
<dbReference type="FunFam" id="3.30.1330.20:FF:000009">
    <property type="entry name" value="Tubulin beta chain"/>
    <property type="match status" value="1"/>
</dbReference>
<dbReference type="FunFam" id="3.40.50.1440:FF:000006">
    <property type="entry name" value="Tubulin beta chain"/>
    <property type="match status" value="1"/>
</dbReference>
<dbReference type="Gene3D" id="1.10.287.600">
    <property type="entry name" value="Helix hairpin bin"/>
    <property type="match status" value="1"/>
</dbReference>
<dbReference type="Gene3D" id="3.30.1330.20">
    <property type="entry name" value="Tubulin/FtsZ, C-terminal domain"/>
    <property type="match status" value="1"/>
</dbReference>
<dbReference type="Gene3D" id="3.40.50.1440">
    <property type="entry name" value="Tubulin/FtsZ, GTPase domain"/>
    <property type="match status" value="1"/>
</dbReference>
<dbReference type="InterPro" id="IPR013838">
    <property type="entry name" value="Beta-tubulin_BS"/>
</dbReference>
<dbReference type="InterPro" id="IPR002453">
    <property type="entry name" value="Beta_tubulin"/>
</dbReference>
<dbReference type="InterPro" id="IPR008280">
    <property type="entry name" value="Tub_FtsZ_C"/>
</dbReference>
<dbReference type="InterPro" id="IPR000217">
    <property type="entry name" value="Tubulin"/>
</dbReference>
<dbReference type="InterPro" id="IPR037103">
    <property type="entry name" value="Tubulin/FtsZ-like_C"/>
</dbReference>
<dbReference type="InterPro" id="IPR018316">
    <property type="entry name" value="Tubulin/FtsZ_2-layer-sand-dom"/>
</dbReference>
<dbReference type="InterPro" id="IPR036525">
    <property type="entry name" value="Tubulin/FtsZ_GTPase_sf"/>
</dbReference>
<dbReference type="InterPro" id="IPR023123">
    <property type="entry name" value="Tubulin_C"/>
</dbReference>
<dbReference type="InterPro" id="IPR017975">
    <property type="entry name" value="Tubulin_CS"/>
</dbReference>
<dbReference type="InterPro" id="IPR003008">
    <property type="entry name" value="Tubulin_FtsZ_GTPase"/>
</dbReference>
<dbReference type="PANTHER" id="PTHR11588">
    <property type="entry name" value="TUBULIN"/>
    <property type="match status" value="1"/>
</dbReference>
<dbReference type="Pfam" id="PF00091">
    <property type="entry name" value="Tubulin"/>
    <property type="match status" value="1"/>
</dbReference>
<dbReference type="Pfam" id="PF03953">
    <property type="entry name" value="Tubulin_C"/>
    <property type="match status" value="1"/>
</dbReference>
<dbReference type="PRINTS" id="PR01163">
    <property type="entry name" value="BETATUBULIN"/>
</dbReference>
<dbReference type="PRINTS" id="PR01161">
    <property type="entry name" value="TUBULIN"/>
</dbReference>
<dbReference type="SMART" id="SM00864">
    <property type="entry name" value="Tubulin"/>
    <property type="match status" value="1"/>
</dbReference>
<dbReference type="SMART" id="SM00865">
    <property type="entry name" value="Tubulin_C"/>
    <property type="match status" value="1"/>
</dbReference>
<dbReference type="SUPFAM" id="SSF55307">
    <property type="entry name" value="Tubulin C-terminal domain-like"/>
    <property type="match status" value="1"/>
</dbReference>
<dbReference type="SUPFAM" id="SSF52490">
    <property type="entry name" value="Tubulin nucleotide-binding domain-like"/>
    <property type="match status" value="1"/>
</dbReference>
<dbReference type="PROSITE" id="PS00227">
    <property type="entry name" value="TUBULIN"/>
    <property type="match status" value="1"/>
</dbReference>
<dbReference type="PROSITE" id="PS00228">
    <property type="entry name" value="TUBULIN_B_AUTOREG"/>
    <property type="match status" value="1"/>
</dbReference>
<feature type="chain" id="PRO_0000048417" description="Tubulin beta-2 chain">
    <location>
        <begin position="1"/>
        <end position="453"/>
    </location>
</feature>
<feature type="binding site" evidence="2">
    <location>
        <position position="11"/>
    </location>
    <ligand>
        <name>GTP</name>
        <dbReference type="ChEBI" id="CHEBI:37565"/>
    </ligand>
</feature>
<feature type="binding site" evidence="1">
    <location>
        <position position="71"/>
    </location>
    <ligand>
        <name>GTP</name>
        <dbReference type="ChEBI" id="CHEBI:37565"/>
    </ligand>
</feature>
<feature type="binding site" evidence="1">
    <location>
        <position position="71"/>
    </location>
    <ligand>
        <name>Mg(2+)</name>
        <dbReference type="ChEBI" id="CHEBI:18420"/>
    </ligand>
</feature>
<feature type="binding site" evidence="2">
    <location>
        <position position="140"/>
    </location>
    <ligand>
        <name>GTP</name>
        <dbReference type="ChEBI" id="CHEBI:37565"/>
    </ligand>
</feature>
<feature type="binding site" evidence="2">
    <location>
        <position position="144"/>
    </location>
    <ligand>
        <name>GTP</name>
        <dbReference type="ChEBI" id="CHEBI:37565"/>
    </ligand>
</feature>
<feature type="binding site" evidence="2">
    <location>
        <position position="145"/>
    </location>
    <ligand>
        <name>GTP</name>
        <dbReference type="ChEBI" id="CHEBI:37565"/>
    </ligand>
</feature>
<feature type="binding site" evidence="2">
    <location>
        <position position="146"/>
    </location>
    <ligand>
        <name>GTP</name>
        <dbReference type="ChEBI" id="CHEBI:37565"/>
    </ligand>
</feature>
<feature type="binding site" evidence="2">
    <location>
        <position position="206"/>
    </location>
    <ligand>
        <name>GTP</name>
        <dbReference type="ChEBI" id="CHEBI:37565"/>
    </ligand>
</feature>
<feature type="binding site" evidence="2">
    <location>
        <position position="228"/>
    </location>
    <ligand>
        <name>GTP</name>
        <dbReference type="ChEBI" id="CHEBI:37565"/>
    </ligand>
</feature>
<sequence length="453" mass="50399">MREIVSIQCGQAGMNQVSTAFWSTITDEHGLDADGHLRPDASSLESDRLDVFFNEASNKKYVPRAVAVDLEPATLDAIRSGPLGHIYRPDNLISGESGAGNNWAKGFYTEGAELMDSVMDIIRREAEQSESLQGFQLAHSLGGGTGSGLGTLLLTKIREEYPDRMLSTYSVLPSPKVSDTVTEPYNAVLSFHQLIDNADATYCLDNEALYDICEKTLKINRPSHQDLNSLIALVMSGVTTGLRYPGQLNGDLRKLAVNLVPFPRLHFFTTGFAPLFAKNSRAFHNLTVPELTQQLFNPANVMAACNPYHGRYLTISTIFRGQVAMKEVEDAIHTARTKYSPYFVEWIPNNVQTSVCNVPPKGLTTSATFIANSTAVQELFERTANQFSVMFKRKGFLHWYTGEGMEPVEFSEAQSDLEDLILEYQQYQNAGVDEDEELMDHEEYADEGVEDFN</sequence>
<accession>P32925</accession>
<protein>
    <recommendedName>
        <fullName>Tubulin beta-2 chain</fullName>
    </recommendedName>
    <alternativeName>
        <fullName>Beta-2-tubulin</fullName>
    </alternativeName>
</protein>
<evidence type="ECO:0000250" key="1">
    <source>
        <dbReference type="UniProtKB" id="P68363"/>
    </source>
</evidence>
<evidence type="ECO:0000250" key="2">
    <source>
        <dbReference type="UniProtKB" id="Q13509"/>
    </source>
</evidence>
<evidence type="ECO:0000305" key="3"/>
<comment type="function">
    <text>Tubulin is the major constituent of microtubules, a cylinder consisting of laterally associated linear protofilaments composed of alpha- and beta-tubulin heterodimers. Microtubules grow by the addition of GTP-tubulin dimers to the microtubule end, where a stabilizing cap forms. Below the cap, tubulin dimers are in GDP-bound state, owing to GTPase activity of alpha-tubulin.</text>
</comment>
<comment type="cofactor">
    <cofactor evidence="1">
        <name>Mg(2+)</name>
        <dbReference type="ChEBI" id="CHEBI:18420"/>
    </cofactor>
</comment>
<comment type="subunit">
    <text>Dimer of alpha and beta chains. A typical microtubule is a hollow water-filled tube with an outer diameter of 25 nm and an inner diameter of 15 nM. Alpha-beta heterodimers associate head-to-tail to form protofilaments running lengthwise along the microtubule wall with the beta-tubulin subunit facing the microtubule plus end conferring a structural polarity. Microtubules usually have 13 protofilaments but different protofilament numbers can be found in some organisms and specialized cells.</text>
</comment>
<comment type="subcellular location">
    <subcellularLocation>
        <location>Cytoplasm</location>
        <location>Cytoskeleton</location>
    </subcellularLocation>
</comment>
<comment type="similarity">
    <text evidence="3">Belongs to the tubulin family.</text>
</comment>
<name>TBB2_GEOCN</name>
<proteinExistence type="inferred from homology"/>